<reference key="1">
    <citation type="journal article" date="2004" name="Nat. Genet.">
        <title>Comparison of genome degradation in Paratyphi A and Typhi, human-restricted serovars of Salmonella enterica that cause typhoid.</title>
        <authorList>
            <person name="McClelland M."/>
            <person name="Sanderson K.E."/>
            <person name="Clifton S.W."/>
            <person name="Latreille P."/>
            <person name="Porwollik S."/>
            <person name="Sabo A."/>
            <person name="Meyer R."/>
            <person name="Bieri T."/>
            <person name="Ozersky P."/>
            <person name="McLellan M."/>
            <person name="Harkins C.R."/>
            <person name="Wang C."/>
            <person name="Nguyen C."/>
            <person name="Berghoff A."/>
            <person name="Elliott G."/>
            <person name="Kohlberg S."/>
            <person name="Strong C."/>
            <person name="Du F."/>
            <person name="Carter J."/>
            <person name="Kremizki C."/>
            <person name="Layman D."/>
            <person name="Leonard S."/>
            <person name="Sun H."/>
            <person name="Fulton L."/>
            <person name="Nash W."/>
            <person name="Miner T."/>
            <person name="Minx P."/>
            <person name="Delehaunty K."/>
            <person name="Fronick C."/>
            <person name="Magrini V."/>
            <person name="Nhan M."/>
            <person name="Warren W."/>
            <person name="Florea L."/>
            <person name="Spieth J."/>
            <person name="Wilson R.K."/>
        </authorList>
    </citation>
    <scope>NUCLEOTIDE SEQUENCE [LARGE SCALE GENOMIC DNA]</scope>
    <source>
        <strain>ATCC 9150 / SARB42</strain>
    </source>
</reference>
<organism>
    <name type="scientific">Salmonella paratyphi A (strain ATCC 9150 / SARB42)</name>
    <dbReference type="NCBI Taxonomy" id="295319"/>
    <lineage>
        <taxon>Bacteria</taxon>
        <taxon>Pseudomonadati</taxon>
        <taxon>Pseudomonadota</taxon>
        <taxon>Gammaproteobacteria</taxon>
        <taxon>Enterobacterales</taxon>
        <taxon>Enterobacteriaceae</taxon>
        <taxon>Salmonella</taxon>
    </lineage>
</organism>
<protein>
    <recommendedName>
        <fullName evidence="1">Probable manganese efflux pump MntP</fullName>
    </recommendedName>
</protein>
<dbReference type="EMBL" id="CP000026">
    <property type="protein sequence ID" value="AAV77010.1"/>
    <property type="status" value="ALT_INIT"/>
    <property type="molecule type" value="Genomic_DNA"/>
</dbReference>
<dbReference type="RefSeq" id="WP_001518359.1">
    <property type="nucleotide sequence ID" value="NC_006511.1"/>
</dbReference>
<dbReference type="KEGG" id="spt:SPA1039"/>
<dbReference type="HOGENOM" id="CLU_096410_0_0_6"/>
<dbReference type="Proteomes" id="UP000008185">
    <property type="component" value="Chromosome"/>
</dbReference>
<dbReference type="GO" id="GO:0005886">
    <property type="term" value="C:plasma membrane"/>
    <property type="evidence" value="ECO:0007669"/>
    <property type="project" value="UniProtKB-SubCell"/>
</dbReference>
<dbReference type="GO" id="GO:0005384">
    <property type="term" value="F:manganese ion transmembrane transporter activity"/>
    <property type="evidence" value="ECO:0007669"/>
    <property type="project" value="UniProtKB-UniRule"/>
</dbReference>
<dbReference type="HAMAP" id="MF_01521">
    <property type="entry name" value="MntP_pump"/>
    <property type="match status" value="1"/>
</dbReference>
<dbReference type="InterPro" id="IPR003810">
    <property type="entry name" value="Mntp/YtaF"/>
</dbReference>
<dbReference type="InterPro" id="IPR022929">
    <property type="entry name" value="Put_MntP"/>
</dbReference>
<dbReference type="NCBIfam" id="NF008546">
    <property type="entry name" value="PRK11469.1"/>
    <property type="match status" value="1"/>
</dbReference>
<dbReference type="PANTHER" id="PTHR35529">
    <property type="entry name" value="MANGANESE EFFLUX PUMP MNTP-RELATED"/>
    <property type="match status" value="1"/>
</dbReference>
<dbReference type="PANTHER" id="PTHR35529:SF1">
    <property type="entry name" value="MANGANESE EFFLUX PUMP MNTP-RELATED"/>
    <property type="match status" value="1"/>
</dbReference>
<dbReference type="Pfam" id="PF02659">
    <property type="entry name" value="Mntp"/>
    <property type="match status" value="1"/>
</dbReference>
<sequence length="188" mass="20049">MHFTATVLLAFGMSMDAFAASIGKGATLHKPKFSEALRTGLIFGAVETLTPLIGWGLGILASKFVLEWNHWIAFVLLIFLGGRMIIEGIRGGSDEDETPLRRHSFWLLVTTAIATSLDAMAVGVGLAFLQVNIIATALAIGCATLIMSTLGMMIGRFIGPMLGKRAEILGGVVLIGIGVQILWTHFHG</sequence>
<name>MNTP_SALPA</name>
<accession>Q5PI77</accession>
<gene>
    <name evidence="1" type="primary">mntP</name>
    <name type="synonym">yebN</name>
    <name type="ordered locus">SPA1039</name>
</gene>
<proteinExistence type="inferred from homology"/>
<comment type="function">
    <text evidence="1">Probably functions as a manganese efflux pump.</text>
</comment>
<comment type="subcellular location">
    <subcellularLocation>
        <location evidence="1">Cell inner membrane</location>
        <topology evidence="1">Multi-pass membrane protein</topology>
    </subcellularLocation>
</comment>
<comment type="similarity">
    <text evidence="1">Belongs to the MntP (TC 9.B.29) family.</text>
</comment>
<comment type="sequence caution" evidence="2">
    <conflict type="erroneous initiation">
        <sequence resource="EMBL-CDS" id="AAV77010"/>
    </conflict>
</comment>
<feature type="chain" id="PRO_0000155664" description="Probable manganese efflux pump MntP">
    <location>
        <begin position="1"/>
        <end position="188"/>
    </location>
</feature>
<feature type="transmembrane region" description="Helical" evidence="1">
    <location>
        <begin position="3"/>
        <end position="23"/>
    </location>
</feature>
<feature type="transmembrane region" description="Helical" evidence="1">
    <location>
        <begin position="41"/>
        <end position="61"/>
    </location>
</feature>
<feature type="transmembrane region" description="Helical" evidence="1">
    <location>
        <begin position="66"/>
        <end position="86"/>
    </location>
</feature>
<feature type="transmembrane region" description="Helical" evidence="1">
    <location>
        <begin position="106"/>
        <end position="128"/>
    </location>
</feature>
<feature type="transmembrane region" description="Helical" evidence="1">
    <location>
        <begin position="143"/>
        <end position="163"/>
    </location>
</feature>
<feature type="transmembrane region" description="Helical" evidence="1">
    <location>
        <begin position="168"/>
        <end position="188"/>
    </location>
</feature>
<evidence type="ECO:0000255" key="1">
    <source>
        <dbReference type="HAMAP-Rule" id="MF_01521"/>
    </source>
</evidence>
<evidence type="ECO:0000305" key="2"/>
<keyword id="KW-0997">Cell inner membrane</keyword>
<keyword id="KW-1003">Cell membrane</keyword>
<keyword id="KW-0406">Ion transport</keyword>
<keyword id="KW-0464">Manganese</keyword>
<keyword id="KW-0472">Membrane</keyword>
<keyword id="KW-0812">Transmembrane</keyword>
<keyword id="KW-1133">Transmembrane helix</keyword>
<keyword id="KW-0813">Transport</keyword>